<reference key="1">
    <citation type="journal article" date="1999" name="Hum. Genet.">
        <title>A novel gene containing LIM domains (LIMD1) is located within the common eliminated region 1 (C3CER1) in 3p21.3.</title>
        <authorList>
            <person name="Kiss H."/>
            <person name="Kedra D."/>
            <person name="Yang Y."/>
            <person name="Kost-Alimova M."/>
            <person name="Kiss C."/>
            <person name="O'Brien K.P."/>
            <person name="Fransson I."/>
            <person name="Klein G."/>
            <person name="Imreh S."/>
            <person name="Dumanski J.P."/>
        </authorList>
    </citation>
    <scope>NUCLEOTIDE SEQUENCE [MRNA]</scope>
    <scope>TISSUE SPECIFICITY</scope>
</reference>
<reference key="2">
    <citation type="journal article" date="2005" name="Science">
        <title>The transcriptional landscape of the mammalian genome.</title>
        <authorList>
            <person name="Carninci P."/>
            <person name="Kasukawa T."/>
            <person name="Katayama S."/>
            <person name="Gough J."/>
            <person name="Frith M.C."/>
            <person name="Maeda N."/>
            <person name="Oyama R."/>
            <person name="Ravasi T."/>
            <person name="Lenhard B."/>
            <person name="Wells C."/>
            <person name="Kodzius R."/>
            <person name="Shimokawa K."/>
            <person name="Bajic V.B."/>
            <person name="Brenner S.E."/>
            <person name="Batalov S."/>
            <person name="Forrest A.R."/>
            <person name="Zavolan M."/>
            <person name="Davis M.J."/>
            <person name="Wilming L.G."/>
            <person name="Aidinis V."/>
            <person name="Allen J.E."/>
            <person name="Ambesi-Impiombato A."/>
            <person name="Apweiler R."/>
            <person name="Aturaliya R.N."/>
            <person name="Bailey T.L."/>
            <person name="Bansal M."/>
            <person name="Baxter L."/>
            <person name="Beisel K.W."/>
            <person name="Bersano T."/>
            <person name="Bono H."/>
            <person name="Chalk A.M."/>
            <person name="Chiu K.P."/>
            <person name="Choudhary V."/>
            <person name="Christoffels A."/>
            <person name="Clutterbuck D.R."/>
            <person name="Crowe M.L."/>
            <person name="Dalla E."/>
            <person name="Dalrymple B.P."/>
            <person name="de Bono B."/>
            <person name="Della Gatta G."/>
            <person name="di Bernardo D."/>
            <person name="Down T."/>
            <person name="Engstrom P."/>
            <person name="Fagiolini M."/>
            <person name="Faulkner G."/>
            <person name="Fletcher C.F."/>
            <person name="Fukushima T."/>
            <person name="Furuno M."/>
            <person name="Futaki S."/>
            <person name="Gariboldi M."/>
            <person name="Georgii-Hemming P."/>
            <person name="Gingeras T.R."/>
            <person name="Gojobori T."/>
            <person name="Green R.E."/>
            <person name="Gustincich S."/>
            <person name="Harbers M."/>
            <person name="Hayashi Y."/>
            <person name="Hensch T.K."/>
            <person name="Hirokawa N."/>
            <person name="Hill D."/>
            <person name="Huminiecki L."/>
            <person name="Iacono M."/>
            <person name="Ikeo K."/>
            <person name="Iwama A."/>
            <person name="Ishikawa T."/>
            <person name="Jakt M."/>
            <person name="Kanapin A."/>
            <person name="Katoh M."/>
            <person name="Kawasawa Y."/>
            <person name="Kelso J."/>
            <person name="Kitamura H."/>
            <person name="Kitano H."/>
            <person name="Kollias G."/>
            <person name="Krishnan S.P."/>
            <person name="Kruger A."/>
            <person name="Kummerfeld S.K."/>
            <person name="Kurochkin I.V."/>
            <person name="Lareau L.F."/>
            <person name="Lazarevic D."/>
            <person name="Lipovich L."/>
            <person name="Liu J."/>
            <person name="Liuni S."/>
            <person name="McWilliam S."/>
            <person name="Madan Babu M."/>
            <person name="Madera M."/>
            <person name="Marchionni L."/>
            <person name="Matsuda H."/>
            <person name="Matsuzawa S."/>
            <person name="Miki H."/>
            <person name="Mignone F."/>
            <person name="Miyake S."/>
            <person name="Morris K."/>
            <person name="Mottagui-Tabar S."/>
            <person name="Mulder N."/>
            <person name="Nakano N."/>
            <person name="Nakauchi H."/>
            <person name="Ng P."/>
            <person name="Nilsson R."/>
            <person name="Nishiguchi S."/>
            <person name="Nishikawa S."/>
            <person name="Nori F."/>
            <person name="Ohara O."/>
            <person name="Okazaki Y."/>
            <person name="Orlando V."/>
            <person name="Pang K.C."/>
            <person name="Pavan W.J."/>
            <person name="Pavesi G."/>
            <person name="Pesole G."/>
            <person name="Petrovsky N."/>
            <person name="Piazza S."/>
            <person name="Reed J."/>
            <person name="Reid J.F."/>
            <person name="Ring B.Z."/>
            <person name="Ringwald M."/>
            <person name="Rost B."/>
            <person name="Ruan Y."/>
            <person name="Salzberg S.L."/>
            <person name="Sandelin A."/>
            <person name="Schneider C."/>
            <person name="Schoenbach C."/>
            <person name="Sekiguchi K."/>
            <person name="Semple C.A."/>
            <person name="Seno S."/>
            <person name="Sessa L."/>
            <person name="Sheng Y."/>
            <person name="Shibata Y."/>
            <person name="Shimada H."/>
            <person name="Shimada K."/>
            <person name="Silva D."/>
            <person name="Sinclair B."/>
            <person name="Sperling S."/>
            <person name="Stupka E."/>
            <person name="Sugiura K."/>
            <person name="Sultana R."/>
            <person name="Takenaka Y."/>
            <person name="Taki K."/>
            <person name="Tammoja K."/>
            <person name="Tan S.L."/>
            <person name="Tang S."/>
            <person name="Taylor M.S."/>
            <person name="Tegner J."/>
            <person name="Teichmann S.A."/>
            <person name="Ueda H.R."/>
            <person name="van Nimwegen E."/>
            <person name="Verardo R."/>
            <person name="Wei C.L."/>
            <person name="Yagi K."/>
            <person name="Yamanishi H."/>
            <person name="Zabarovsky E."/>
            <person name="Zhu S."/>
            <person name="Zimmer A."/>
            <person name="Hide W."/>
            <person name="Bult C."/>
            <person name="Grimmond S.M."/>
            <person name="Teasdale R.D."/>
            <person name="Liu E.T."/>
            <person name="Brusic V."/>
            <person name="Quackenbush J."/>
            <person name="Wahlestedt C."/>
            <person name="Mattick J.S."/>
            <person name="Hume D.A."/>
            <person name="Kai C."/>
            <person name="Sasaki D."/>
            <person name="Tomaru Y."/>
            <person name="Fukuda S."/>
            <person name="Kanamori-Katayama M."/>
            <person name="Suzuki M."/>
            <person name="Aoki J."/>
            <person name="Arakawa T."/>
            <person name="Iida J."/>
            <person name="Imamura K."/>
            <person name="Itoh M."/>
            <person name="Kato T."/>
            <person name="Kawaji H."/>
            <person name="Kawagashira N."/>
            <person name="Kawashima T."/>
            <person name="Kojima M."/>
            <person name="Kondo S."/>
            <person name="Konno H."/>
            <person name="Nakano K."/>
            <person name="Ninomiya N."/>
            <person name="Nishio T."/>
            <person name="Okada M."/>
            <person name="Plessy C."/>
            <person name="Shibata K."/>
            <person name="Shiraki T."/>
            <person name="Suzuki S."/>
            <person name="Tagami M."/>
            <person name="Waki K."/>
            <person name="Watahiki A."/>
            <person name="Okamura-Oho Y."/>
            <person name="Suzuki H."/>
            <person name="Kawai J."/>
            <person name="Hayashizaki Y."/>
        </authorList>
    </citation>
    <scope>NUCLEOTIDE SEQUENCE [LARGE SCALE MRNA]</scope>
    <source>
        <strain>C57BL/6J</strain>
        <tissue>Cerebellum</tissue>
        <tissue>Lung</tissue>
    </source>
</reference>
<reference key="3">
    <citation type="journal article" date="2004" name="Genome Res.">
        <title>The status, quality, and expansion of the NIH full-length cDNA project: the Mammalian Gene Collection (MGC).</title>
        <authorList>
            <consortium name="The MGC Project Team"/>
        </authorList>
    </citation>
    <scope>NUCLEOTIDE SEQUENCE [LARGE SCALE MRNA]</scope>
    <source>
        <strain>C57BL/6J</strain>
        <tissue>Brain</tissue>
    </source>
</reference>
<reference key="4">
    <citation type="journal article" date="2007" name="J. Biol. Chem.">
        <title>The LIM protein, Limd1, regulates AP-1 activation through an interaction with Traf6 to influence osteoclast development.</title>
        <authorList>
            <person name="Feng Y."/>
            <person name="Zhao H."/>
            <person name="Luderer H.F."/>
            <person name="Epple H."/>
            <person name="Faccio R."/>
            <person name="Ross F.P."/>
            <person name="Teitelbaum S.L."/>
            <person name="Longmore G.D."/>
        </authorList>
    </citation>
    <scope>FUNCTION</scope>
    <scope>INDUCTION</scope>
    <scope>INTERACTION WITH TRAF6</scope>
</reference>
<reference key="5">
    <citation type="journal article" date="2008" name="Dev. Cell">
        <title>Ajuba LIM proteins are snail/slug corepressors required for neural crest development in Xenopus.</title>
        <authorList>
            <person name="Langer E.M."/>
            <person name="Feng Y."/>
            <person name="Zhaoyuan H."/>
            <person name="Rauscher F.J. III"/>
            <person name="Kroll K.L."/>
            <person name="Longmore G.D."/>
        </authorList>
    </citation>
    <scope>INTERACTION WITH SNAI1; SNAI2/SLUG AND SCRT1</scope>
</reference>
<reference key="6">
    <citation type="journal article" date="2008" name="Exp. Cell Res.">
        <title>The LIM protein LIMD1 influences osteoblast differentiation and function.</title>
        <authorList>
            <person name="Luderer H.F."/>
            <person name="Bai S."/>
            <person name="Longmore G.D."/>
        </authorList>
    </citation>
    <scope>FUNCTION</scope>
    <scope>SUBCELLULAR LOCATION</scope>
    <scope>INDUCTION</scope>
</reference>
<reference key="7">
    <citation type="journal article" date="2010" name="Cell">
        <title>A tissue-specific atlas of mouse protein phosphorylation and expression.</title>
        <authorList>
            <person name="Huttlin E.L."/>
            <person name="Jedrychowski M.P."/>
            <person name="Elias J.E."/>
            <person name="Goswami T."/>
            <person name="Rad R."/>
            <person name="Beausoleil S.A."/>
            <person name="Villen J."/>
            <person name="Haas W."/>
            <person name="Sowa M.E."/>
            <person name="Gygi S.P."/>
        </authorList>
    </citation>
    <scope>PHOSPHORYLATION [LARGE SCALE ANALYSIS] AT SER-413</scope>
    <scope>IDENTIFICATION BY MASS SPECTROMETRY [LARGE SCALE ANALYSIS]</scope>
    <source>
        <tissue>Heart</tissue>
        <tissue>Kidney</tissue>
        <tissue>Lung</tissue>
        <tissue>Pancreas</tissue>
        <tissue>Spleen</tissue>
        <tissue>Testis</tissue>
    </source>
</reference>
<feature type="chain" id="PRO_0000075802" description="LIM domain-containing protein 1">
    <location>
        <begin position="1"/>
        <end position="668"/>
    </location>
</feature>
<feature type="domain" description="LIM zinc-binding 1" evidence="4">
    <location>
        <begin position="462"/>
        <end position="523"/>
    </location>
</feature>
<feature type="domain" description="LIM zinc-binding 2" evidence="4">
    <location>
        <begin position="527"/>
        <end position="587"/>
    </location>
</feature>
<feature type="domain" description="LIM zinc-binding 3" evidence="4">
    <location>
        <begin position="587"/>
        <end position="656"/>
    </location>
</feature>
<feature type="region of interest" description="Mediates nuclear export" evidence="1">
    <location>
        <begin position="54"/>
        <end position="128"/>
    </location>
</feature>
<feature type="region of interest" description="Disordered" evidence="5">
    <location>
        <begin position="74"/>
        <end position="160"/>
    </location>
</feature>
<feature type="region of interest" description="Interaction with EGLN1/PHD2" evidence="1">
    <location>
        <begin position="181"/>
        <end position="256"/>
    </location>
</feature>
<feature type="region of interest" description="Disordered" evidence="5">
    <location>
        <begin position="239"/>
        <end position="258"/>
    </location>
</feature>
<feature type="region of interest" description="Disordered" evidence="5">
    <location>
        <begin position="277"/>
        <end position="309"/>
    </location>
</feature>
<feature type="region of interest" description="Disordered" evidence="5">
    <location>
        <begin position="340"/>
        <end position="414"/>
    </location>
</feature>
<feature type="region of interest" description="Interaction with RB1" evidence="1">
    <location>
        <begin position="396"/>
        <end position="434"/>
    </location>
</feature>
<feature type="region of interest" description="Necessary for nuclear localization" evidence="1">
    <location>
        <begin position="464"/>
        <end position="668"/>
    </location>
</feature>
<feature type="compositionally biased region" description="Polar residues" evidence="5">
    <location>
        <begin position="111"/>
        <end position="125"/>
    </location>
</feature>
<feature type="compositionally biased region" description="Polar residues" evidence="5">
    <location>
        <begin position="138"/>
        <end position="153"/>
    </location>
</feature>
<feature type="compositionally biased region" description="Polar residues" evidence="5">
    <location>
        <begin position="278"/>
        <end position="300"/>
    </location>
</feature>
<feature type="compositionally biased region" description="Polar residues" evidence="5">
    <location>
        <begin position="340"/>
        <end position="356"/>
    </location>
</feature>
<feature type="compositionally biased region" description="Polar residues" evidence="5">
    <location>
        <begin position="369"/>
        <end position="405"/>
    </location>
</feature>
<feature type="modified residue" description="Phosphoserine" evidence="3">
    <location>
        <position position="139"/>
    </location>
</feature>
<feature type="modified residue" description="Phosphoserine" evidence="3">
    <location>
        <position position="228"/>
    </location>
</feature>
<feature type="modified residue" description="Phosphoserine" evidence="2">
    <location>
        <position position="235"/>
    </location>
</feature>
<feature type="modified residue" description="Phosphoserine" evidence="3">
    <location>
        <position position="273"/>
    </location>
</feature>
<feature type="modified residue" description="Phosphoserine" evidence="3">
    <location>
        <position position="296"/>
    </location>
</feature>
<feature type="modified residue" description="Phosphoserine" evidence="2">
    <location>
        <position position="308"/>
    </location>
</feature>
<feature type="modified residue" description="Phosphoserine" evidence="11">
    <location>
        <position position="413"/>
    </location>
</feature>
<feature type="sequence conflict" description="In Ref. 2; BAC32988." evidence="10" ref="2">
    <original>D</original>
    <variation>E</variation>
    <location>
        <position position="17"/>
    </location>
</feature>
<feature type="sequence conflict" description="In Ref. 3; AAH56449." evidence="10" ref="3">
    <original>D</original>
    <variation>N</variation>
    <location>
        <position position="331"/>
    </location>
</feature>
<feature type="sequence conflict" description="In Ref. 2; BAC32988." evidence="10" ref="2">
    <original>D</original>
    <variation>N</variation>
    <location>
        <position position="487"/>
    </location>
</feature>
<accession>Q9QXD8</accession>
<accession>Q8C8G4</accession>
<accession>Q9CW55</accession>
<gene>
    <name type="primary">Limd1</name>
</gene>
<sequence length="668" mass="71422">MDKYDDLGLEASKFIEDLNMYEASKDGLFRVDKGAGNNPEFEETRRVFATKMAKIHLQQQQQQQLLQEEALPRAGRSPVNGGNRQGASGKLAADGAAKPPLAVPTVAPGLATTTAAAQPSYPSQEQRIRPSAHGARPGSQNCGSREGPVSSQRPALHGLSPSCEDPSCLTHGDYYDNFSLASPQWGDKPEGCPSVSLGVGSGWPGCPGNDSTLPKSCGDHHPYQPQLSTVCSGRSFESGISGQDGGIGGHSSEKPTGLWSTASSQRVNLGFSSMGLENGTSAQPKGTTVSAPMVPSSASQGACPKRDSGLGYEASGRVFKPLVDTQPWLQDGPKSYLSVSAPLSSTAGKDSTQPGMTTGLDPKFGCVESGTSPKPSPTSNVHPVMSTPSELSCKESSPSWSTDSSLEPVLPGSPTPSRVRLPCQTLAPGPELGPSTAELKLEALTQRLEREMDAHPKADYFGSCVKCSKGVFGAGQACQAMGDLYHDACFTCAACSRKLRGKAFYFVNGKVFCEEDFLYSGFQQSADRCFLCGHLIMDMILQALGKSYHPGCFRCVICNECLDGVPFTVDSENKIYCVRDYHKVLAPKCAACGLPILPPEGSDETIRVVSMDRDYHVECYHCEDCGLELNDEDGHRCYPLEDHLFCHSCHVKRLEKGPSPAPLHQHHF</sequence>
<evidence type="ECO:0000250" key="1"/>
<evidence type="ECO:0000250" key="2">
    <source>
        <dbReference type="UniProtKB" id="B5DEH0"/>
    </source>
</evidence>
<evidence type="ECO:0000250" key="3">
    <source>
        <dbReference type="UniProtKB" id="Q9UGP4"/>
    </source>
</evidence>
<evidence type="ECO:0000255" key="4">
    <source>
        <dbReference type="PROSITE-ProRule" id="PRU00125"/>
    </source>
</evidence>
<evidence type="ECO:0000256" key="5">
    <source>
        <dbReference type="SAM" id="MobiDB-lite"/>
    </source>
</evidence>
<evidence type="ECO:0000269" key="6">
    <source>
    </source>
</evidence>
<evidence type="ECO:0000269" key="7">
    <source>
    </source>
</evidence>
<evidence type="ECO:0000269" key="8">
    <source>
    </source>
</evidence>
<evidence type="ECO:0000269" key="9">
    <source>
    </source>
</evidence>
<evidence type="ECO:0000305" key="10"/>
<evidence type="ECO:0007744" key="11">
    <source>
    </source>
</evidence>
<protein>
    <recommendedName>
        <fullName>LIM domain-containing protein 1</fullName>
    </recommendedName>
</protein>
<name>LIMD1_MOUSE</name>
<keyword id="KW-0965">Cell junction</keyword>
<keyword id="KW-0963">Cytoplasm</keyword>
<keyword id="KW-0440">LIM domain</keyword>
<keyword id="KW-0479">Metal-binding</keyword>
<keyword id="KW-0539">Nucleus</keyword>
<keyword id="KW-0597">Phosphoprotein</keyword>
<keyword id="KW-1185">Reference proteome</keyword>
<keyword id="KW-0677">Repeat</keyword>
<keyword id="KW-0678">Repressor</keyword>
<keyword id="KW-0943">RNA-mediated gene silencing</keyword>
<keyword id="KW-0804">Transcription</keyword>
<keyword id="KW-0805">Transcription regulation</keyword>
<keyword id="KW-0043">Tumor suppressor</keyword>
<keyword id="KW-0862">Zinc</keyword>
<organism>
    <name type="scientific">Mus musculus</name>
    <name type="common">Mouse</name>
    <dbReference type="NCBI Taxonomy" id="10090"/>
    <lineage>
        <taxon>Eukaryota</taxon>
        <taxon>Metazoa</taxon>
        <taxon>Chordata</taxon>
        <taxon>Craniata</taxon>
        <taxon>Vertebrata</taxon>
        <taxon>Euteleostomi</taxon>
        <taxon>Mammalia</taxon>
        <taxon>Eutheria</taxon>
        <taxon>Euarchontoglires</taxon>
        <taxon>Glires</taxon>
        <taxon>Rodentia</taxon>
        <taxon>Myomorpha</taxon>
        <taxon>Muroidea</taxon>
        <taxon>Muridae</taxon>
        <taxon>Murinae</taxon>
        <taxon>Mus</taxon>
        <taxon>Mus</taxon>
    </lineage>
</organism>
<dbReference type="EMBL" id="AJ132409">
    <property type="protein sequence ID" value="CAB63700.1"/>
    <property type="molecule type" value="mRNA"/>
</dbReference>
<dbReference type="EMBL" id="AK004806">
    <property type="protein sequence ID" value="BAB23578.1"/>
    <property type="molecule type" value="mRNA"/>
</dbReference>
<dbReference type="EMBL" id="AK047198">
    <property type="protein sequence ID" value="BAC32988.1"/>
    <property type="molecule type" value="mRNA"/>
</dbReference>
<dbReference type="EMBL" id="BC056449">
    <property type="protein sequence ID" value="AAH56449.1"/>
    <property type="molecule type" value="mRNA"/>
</dbReference>
<dbReference type="CCDS" id="CCDS23660.1"/>
<dbReference type="RefSeq" id="NP_038888.2">
    <property type="nucleotide sequence ID" value="NM_013860.3"/>
</dbReference>
<dbReference type="BioGRID" id="205887">
    <property type="interactions" value="5"/>
</dbReference>
<dbReference type="CORUM" id="Q9QXD8"/>
<dbReference type="DIP" id="DIP-38453N"/>
<dbReference type="FunCoup" id="Q9QXD8">
    <property type="interactions" value="770"/>
</dbReference>
<dbReference type="IntAct" id="Q9QXD8">
    <property type="interactions" value="6"/>
</dbReference>
<dbReference type="MINT" id="Q9QXD8"/>
<dbReference type="STRING" id="10090.ENSMUSP00000026269"/>
<dbReference type="GlyGen" id="Q9QXD8">
    <property type="glycosylation" value="5 sites, 1 O-linked glycan (3 sites)"/>
</dbReference>
<dbReference type="iPTMnet" id="Q9QXD8"/>
<dbReference type="PhosphoSitePlus" id="Q9QXD8"/>
<dbReference type="jPOST" id="Q9QXD8"/>
<dbReference type="PaxDb" id="10090-ENSMUSP00000026269"/>
<dbReference type="PeptideAtlas" id="Q9QXD8"/>
<dbReference type="ProteomicsDB" id="292257"/>
<dbReference type="Pumba" id="Q9QXD8"/>
<dbReference type="Antibodypedia" id="29569">
    <property type="antibodies" value="215 antibodies from 28 providers"/>
</dbReference>
<dbReference type="DNASU" id="29806"/>
<dbReference type="Ensembl" id="ENSMUST00000026269.4">
    <property type="protein sequence ID" value="ENSMUSP00000026269.3"/>
    <property type="gene ID" value="ENSMUSG00000025239.4"/>
</dbReference>
<dbReference type="GeneID" id="29806"/>
<dbReference type="KEGG" id="mmu:29806"/>
<dbReference type="UCSC" id="uc009sge.2">
    <property type="organism name" value="mouse"/>
</dbReference>
<dbReference type="AGR" id="MGI:1352502"/>
<dbReference type="CTD" id="8994"/>
<dbReference type="MGI" id="MGI:1352502">
    <property type="gene designation" value="Limd1"/>
</dbReference>
<dbReference type="VEuPathDB" id="HostDB:ENSMUSG00000025239"/>
<dbReference type="eggNOG" id="KOG1701">
    <property type="taxonomic scope" value="Eukaryota"/>
</dbReference>
<dbReference type="GeneTree" id="ENSGT00940000159019"/>
<dbReference type="HOGENOM" id="CLU_001357_11_1_1"/>
<dbReference type="InParanoid" id="Q9QXD8"/>
<dbReference type="OMA" id="SCKEGPP"/>
<dbReference type="OrthoDB" id="25414at2759"/>
<dbReference type="PhylomeDB" id="Q9QXD8"/>
<dbReference type="TreeFam" id="TF320310"/>
<dbReference type="Reactome" id="R-MMU-1234176">
    <property type="pathway name" value="Oxygen-dependent proline hydroxylation of Hypoxia-inducible Factor Alpha"/>
</dbReference>
<dbReference type="BioGRID-ORCS" id="29806">
    <property type="hits" value="1 hit in 79 CRISPR screens"/>
</dbReference>
<dbReference type="ChiTaRS" id="Limd1">
    <property type="organism name" value="mouse"/>
</dbReference>
<dbReference type="PRO" id="PR:Q9QXD8"/>
<dbReference type="Proteomes" id="UP000000589">
    <property type="component" value="Chromosome 9"/>
</dbReference>
<dbReference type="RNAct" id="Q9QXD8">
    <property type="molecule type" value="protein"/>
</dbReference>
<dbReference type="Bgee" id="ENSMUSG00000025239">
    <property type="expression patterns" value="Expressed in saccule of membranous labyrinth and 252 other cell types or tissues"/>
</dbReference>
<dbReference type="ExpressionAtlas" id="Q9QXD8">
    <property type="expression patterns" value="baseline and differential"/>
</dbReference>
<dbReference type="GO" id="GO:0005912">
    <property type="term" value="C:adherens junction"/>
    <property type="evidence" value="ECO:0000250"/>
    <property type="project" value="UniProtKB"/>
</dbReference>
<dbReference type="GO" id="GO:0005737">
    <property type="term" value="C:cytoplasm"/>
    <property type="evidence" value="ECO:0000314"/>
    <property type="project" value="UniProtKB"/>
</dbReference>
<dbReference type="GO" id="GO:0005925">
    <property type="term" value="C:focal adhesion"/>
    <property type="evidence" value="ECO:0000250"/>
    <property type="project" value="UniProtKB"/>
</dbReference>
<dbReference type="GO" id="GO:0005654">
    <property type="term" value="C:nucleoplasm"/>
    <property type="evidence" value="ECO:0007669"/>
    <property type="project" value="Ensembl"/>
</dbReference>
<dbReference type="GO" id="GO:0005634">
    <property type="term" value="C:nucleus"/>
    <property type="evidence" value="ECO:0000250"/>
    <property type="project" value="UniProtKB"/>
</dbReference>
<dbReference type="GO" id="GO:0000932">
    <property type="term" value="C:P-body"/>
    <property type="evidence" value="ECO:0000266"/>
    <property type="project" value="MGI"/>
</dbReference>
<dbReference type="GO" id="GO:0005886">
    <property type="term" value="C:plasma membrane"/>
    <property type="evidence" value="ECO:0007669"/>
    <property type="project" value="Ensembl"/>
</dbReference>
<dbReference type="GO" id="GO:0016442">
    <property type="term" value="C:RISC complex"/>
    <property type="evidence" value="ECO:0000266"/>
    <property type="project" value="MGI"/>
</dbReference>
<dbReference type="GO" id="GO:0046872">
    <property type="term" value="F:metal ion binding"/>
    <property type="evidence" value="ECO:0007669"/>
    <property type="project" value="UniProtKB-KW"/>
</dbReference>
<dbReference type="GO" id="GO:0003714">
    <property type="term" value="F:transcription corepressor activity"/>
    <property type="evidence" value="ECO:0000314"/>
    <property type="project" value="UniProtKB"/>
</dbReference>
<dbReference type="GO" id="GO:0016477">
    <property type="term" value="P:cell migration"/>
    <property type="evidence" value="ECO:0000250"/>
    <property type="project" value="UniProtKB"/>
</dbReference>
<dbReference type="GO" id="GO:0007010">
    <property type="term" value="P:cytoskeleton organization"/>
    <property type="evidence" value="ECO:0000250"/>
    <property type="project" value="UniProtKB"/>
</dbReference>
<dbReference type="GO" id="GO:0035278">
    <property type="term" value="P:miRNA-mediated gene silencing by inhibition of translation"/>
    <property type="evidence" value="ECO:0000250"/>
    <property type="project" value="UniProtKB"/>
</dbReference>
<dbReference type="GO" id="GO:0035195">
    <property type="term" value="P:miRNA-mediated post-transcriptional gene silencing"/>
    <property type="evidence" value="ECO:0000266"/>
    <property type="project" value="MGI"/>
</dbReference>
<dbReference type="GO" id="GO:0090090">
    <property type="term" value="P:negative regulation of canonical Wnt signaling pathway"/>
    <property type="evidence" value="ECO:0000315"/>
    <property type="project" value="UniProtKB"/>
</dbReference>
<dbReference type="GO" id="GO:0045892">
    <property type="term" value="P:negative regulation of DNA-templated transcription"/>
    <property type="evidence" value="ECO:0000250"/>
    <property type="project" value="UniProtKB"/>
</dbReference>
<dbReference type="GO" id="GO:0035331">
    <property type="term" value="P:negative regulation of hippo signaling"/>
    <property type="evidence" value="ECO:0000250"/>
    <property type="project" value="UniProtKB"/>
</dbReference>
<dbReference type="GO" id="GO:0045668">
    <property type="term" value="P:negative regulation of osteoblast differentiation"/>
    <property type="evidence" value="ECO:0000315"/>
    <property type="project" value="UniProtKB"/>
</dbReference>
<dbReference type="GO" id="GO:0002076">
    <property type="term" value="P:osteoblast development"/>
    <property type="evidence" value="ECO:0000315"/>
    <property type="project" value="UniProtKB"/>
</dbReference>
<dbReference type="GO" id="GO:0033962">
    <property type="term" value="P:P-body assembly"/>
    <property type="evidence" value="ECO:0000266"/>
    <property type="project" value="MGI"/>
</dbReference>
<dbReference type="GO" id="GO:0016310">
    <property type="term" value="P:phosphorylation"/>
    <property type="evidence" value="ECO:0000250"/>
    <property type="project" value="UniProtKB"/>
</dbReference>
<dbReference type="GO" id="GO:0008360">
    <property type="term" value="P:regulation of cell shape"/>
    <property type="evidence" value="ECO:0000250"/>
    <property type="project" value="UniProtKB"/>
</dbReference>
<dbReference type="GO" id="GO:0001666">
    <property type="term" value="P:response to hypoxia"/>
    <property type="evidence" value="ECO:0000250"/>
    <property type="project" value="UniProtKB"/>
</dbReference>
<dbReference type="CDD" id="cd09352">
    <property type="entry name" value="LIM1_Ajuba_like"/>
    <property type="match status" value="1"/>
</dbReference>
<dbReference type="CDD" id="cd09355">
    <property type="entry name" value="LIM2_Ajuba_like"/>
    <property type="match status" value="1"/>
</dbReference>
<dbReference type="CDD" id="cd09438">
    <property type="entry name" value="LIM3_Ajuba_like"/>
    <property type="match status" value="1"/>
</dbReference>
<dbReference type="FunFam" id="2.10.110.10:FF:000028">
    <property type="entry name" value="LIM domain-containing protein 1"/>
    <property type="match status" value="1"/>
</dbReference>
<dbReference type="FunFam" id="2.10.110.10:FF:000037">
    <property type="entry name" value="LIM domain-containing protein 1"/>
    <property type="match status" value="1"/>
</dbReference>
<dbReference type="Gene3D" id="2.10.110.10">
    <property type="entry name" value="Cysteine Rich Protein"/>
    <property type="match status" value="3"/>
</dbReference>
<dbReference type="InterPro" id="IPR047172">
    <property type="entry name" value="Ajuba-like"/>
</dbReference>
<dbReference type="InterPro" id="IPR047245">
    <property type="entry name" value="Ajuba-like_LIM1"/>
</dbReference>
<dbReference type="InterPro" id="IPR047247">
    <property type="entry name" value="Ajuba-like_LIM2"/>
</dbReference>
<dbReference type="InterPro" id="IPR047248">
    <property type="entry name" value="Ajuba-like_LIM3"/>
</dbReference>
<dbReference type="InterPro" id="IPR001781">
    <property type="entry name" value="Znf_LIM"/>
</dbReference>
<dbReference type="PANTHER" id="PTHR24219:SF3">
    <property type="entry name" value="LIM DOMAIN-CONTAINING PROTEIN 1"/>
    <property type="match status" value="1"/>
</dbReference>
<dbReference type="PANTHER" id="PTHR24219">
    <property type="entry name" value="LIM DOMAIN-CONTAINING PROTEIN JUB"/>
    <property type="match status" value="1"/>
</dbReference>
<dbReference type="Pfam" id="PF00412">
    <property type="entry name" value="LIM"/>
    <property type="match status" value="3"/>
</dbReference>
<dbReference type="SMART" id="SM00132">
    <property type="entry name" value="LIM"/>
    <property type="match status" value="3"/>
</dbReference>
<dbReference type="SUPFAM" id="SSF57716">
    <property type="entry name" value="Glucocorticoid receptor-like (DNA-binding domain)"/>
    <property type="match status" value="2"/>
</dbReference>
<dbReference type="PROSITE" id="PS00478">
    <property type="entry name" value="LIM_DOMAIN_1"/>
    <property type="match status" value="2"/>
</dbReference>
<dbReference type="PROSITE" id="PS50023">
    <property type="entry name" value="LIM_DOMAIN_2"/>
    <property type="match status" value="3"/>
</dbReference>
<proteinExistence type="evidence at protein level"/>
<comment type="function">
    <text evidence="7 9">Adapter or scaffold protein which participates in the assembly of numerous protein complexes and is involved in several cellular processes such as cell fate determination, cytoskeletal organization, repression of gene transcription, cell-cell adhesion, cell differentiation, proliferation and migration. Positively regulates microRNA (miRNA)-mediated gene silencing and is essential for P-body formation and integrity. Acts as a hypoxic regulator by bridging an association between the prolyl hydroxylases and VHL enabling efficient degradation of HIF1A. Acts as a transcriptional corepressor for SNAI1- and SNAI2/SLUG-dependent repression of E-cadherin transcription. Negatively regulates the Hippo signaling pathway and antagonizes phosphorylation of YAP1. Inhibits E2F-mediated transcription, and suppresses the expression of the majority of genes with E2F1-responsive elements. Regulates osteoblast development, function, differentiation and stress osteoclastogenesis. Enhances the ability of TRAF6 to activate adapter protein complex 1 (AP-1) and negatively regulates the canonical Wnt receptor signaling pathway in osteoblasts. May act as a tumor suppressor by inhibiting cell proliferation.</text>
</comment>
<comment type="subunit">
    <text evidence="1 7 8">Interacts with SQSTM1 and RB1. Interacts with EIF4E, AGO1, AGO2, DCP2, DDX6, LATS1, LATS2, EGLN1/PHD2, EGLN2/PHD1 and EGLN3/PHD3. Interacts (via LIM zinc-binding 2) with VHL. Found in a complex composed of LIMD1, VHL, EGLN1/PHD2, ELOB and CUL2 (By similarity). Interacts (via LIM domains) with SNAI1 (via SNAG domain), SNAI2/SLUG (via SNAG domain) and SCRT1 (via SNAG domain). Found in a complex with TRAF6, PRKCZ and SQSTM1. Interacts (via LIM domains) with TRAF6.</text>
</comment>
<comment type="subcellular location">
    <subcellularLocation>
        <location evidence="9">Cytoplasm</location>
    </subcellularLocation>
    <subcellularLocation>
        <location evidence="1">Nucleus</location>
    </subcellularLocation>
    <subcellularLocation>
        <location evidence="1">Cytoplasm</location>
        <location evidence="1">P-body</location>
    </subcellularLocation>
    <subcellularLocation>
        <location evidence="1">Cell junction</location>
        <location evidence="1">Adherens junction</location>
    </subcellularLocation>
    <subcellularLocation>
        <location evidence="1">Cell junction</location>
        <location evidence="1">Focal adhesion</location>
    </subcellularLocation>
    <text evidence="1">Shuttles between cytoplasm and nucleus but is localized predominantly to the cytoplasm. Found in the nucleus but not nucleoli. Colocalizes with VCL in the focal adhesions (By similarity).</text>
</comment>
<comment type="tissue specificity">
    <text evidence="6">Ubiquitous.</text>
</comment>
<comment type="induction">
    <text evidence="7 9">Up-regulated during osteoclast differentiation.</text>
</comment>
<comment type="PTM">
    <text evidence="1">Phosphorylated during mitosis.</text>
</comment>
<comment type="similarity">
    <text evidence="10">Belongs to the zyxin/ajuba family.</text>
</comment>